<reference key="1">
    <citation type="journal article" date="2012" name="BMC Genomics">
        <title>Comparative genomics and transcriptomics of lineages I, II, and III strains of Listeria monocytogenes.</title>
        <authorList>
            <person name="Hain T."/>
            <person name="Ghai R."/>
            <person name="Billion A."/>
            <person name="Kuenne C.T."/>
            <person name="Steinweg C."/>
            <person name="Izar B."/>
            <person name="Mohamed W."/>
            <person name="Mraheil M."/>
            <person name="Domann E."/>
            <person name="Schaffrath S."/>
            <person name="Karst U."/>
            <person name="Goesmann A."/>
            <person name="Oehm S."/>
            <person name="Puhler A."/>
            <person name="Merkl R."/>
            <person name="Vorwerk S."/>
            <person name="Glaser P."/>
            <person name="Garrido P."/>
            <person name="Rusniok C."/>
            <person name="Buchrieser C."/>
            <person name="Goebel W."/>
            <person name="Chakraborty T."/>
        </authorList>
    </citation>
    <scope>NUCLEOTIDE SEQUENCE [LARGE SCALE GENOMIC DNA]</scope>
    <source>
        <strain>CLIP80459</strain>
    </source>
</reference>
<dbReference type="EC" id="2.8.1.13" evidence="1"/>
<dbReference type="EMBL" id="FM242711">
    <property type="protein sequence ID" value="CAS05284.1"/>
    <property type="molecule type" value="Genomic_DNA"/>
</dbReference>
<dbReference type="RefSeq" id="WP_003727410.1">
    <property type="nucleotide sequence ID" value="NC_012488.1"/>
</dbReference>
<dbReference type="SMR" id="C1KVF9"/>
<dbReference type="KEGG" id="lmc:Lm4b_01522"/>
<dbReference type="HOGENOM" id="CLU_035188_1_0_9"/>
<dbReference type="GO" id="GO:0005737">
    <property type="term" value="C:cytoplasm"/>
    <property type="evidence" value="ECO:0007669"/>
    <property type="project" value="UniProtKB-SubCell"/>
</dbReference>
<dbReference type="GO" id="GO:0005524">
    <property type="term" value="F:ATP binding"/>
    <property type="evidence" value="ECO:0007669"/>
    <property type="project" value="UniProtKB-KW"/>
</dbReference>
<dbReference type="GO" id="GO:0000049">
    <property type="term" value="F:tRNA binding"/>
    <property type="evidence" value="ECO:0007669"/>
    <property type="project" value="UniProtKB-KW"/>
</dbReference>
<dbReference type="GO" id="GO:0103016">
    <property type="term" value="F:tRNA-uridine 2-sulfurtransferase activity"/>
    <property type="evidence" value="ECO:0007669"/>
    <property type="project" value="UniProtKB-EC"/>
</dbReference>
<dbReference type="GO" id="GO:0002143">
    <property type="term" value="P:tRNA wobble position uridine thiolation"/>
    <property type="evidence" value="ECO:0007669"/>
    <property type="project" value="TreeGrafter"/>
</dbReference>
<dbReference type="CDD" id="cd01998">
    <property type="entry name" value="MnmA_TRMU-like"/>
    <property type="match status" value="1"/>
</dbReference>
<dbReference type="FunFam" id="2.30.30.280:FF:000001">
    <property type="entry name" value="tRNA-specific 2-thiouridylase MnmA"/>
    <property type="match status" value="1"/>
</dbReference>
<dbReference type="FunFam" id="2.40.30.10:FF:000023">
    <property type="entry name" value="tRNA-specific 2-thiouridylase MnmA"/>
    <property type="match status" value="1"/>
</dbReference>
<dbReference type="FunFam" id="3.40.50.620:FF:000004">
    <property type="entry name" value="tRNA-specific 2-thiouridylase MnmA"/>
    <property type="match status" value="1"/>
</dbReference>
<dbReference type="Gene3D" id="2.30.30.280">
    <property type="entry name" value="Adenine nucleotide alpha hydrolases-like domains"/>
    <property type="match status" value="1"/>
</dbReference>
<dbReference type="Gene3D" id="3.40.50.620">
    <property type="entry name" value="HUPs"/>
    <property type="match status" value="1"/>
</dbReference>
<dbReference type="Gene3D" id="2.40.30.10">
    <property type="entry name" value="Translation factors"/>
    <property type="match status" value="1"/>
</dbReference>
<dbReference type="HAMAP" id="MF_00144">
    <property type="entry name" value="tRNA_thiouridyl_MnmA"/>
    <property type="match status" value="1"/>
</dbReference>
<dbReference type="InterPro" id="IPR004506">
    <property type="entry name" value="MnmA-like"/>
</dbReference>
<dbReference type="InterPro" id="IPR046885">
    <property type="entry name" value="MnmA-like_C"/>
</dbReference>
<dbReference type="InterPro" id="IPR046884">
    <property type="entry name" value="MnmA-like_central"/>
</dbReference>
<dbReference type="InterPro" id="IPR023382">
    <property type="entry name" value="MnmA-like_central_sf"/>
</dbReference>
<dbReference type="InterPro" id="IPR014729">
    <property type="entry name" value="Rossmann-like_a/b/a_fold"/>
</dbReference>
<dbReference type="NCBIfam" id="NF001138">
    <property type="entry name" value="PRK00143.1"/>
    <property type="match status" value="1"/>
</dbReference>
<dbReference type="NCBIfam" id="TIGR00420">
    <property type="entry name" value="trmU"/>
    <property type="match status" value="1"/>
</dbReference>
<dbReference type="PANTHER" id="PTHR11933:SF5">
    <property type="entry name" value="MITOCHONDRIAL TRNA-SPECIFIC 2-THIOURIDYLASE 1"/>
    <property type="match status" value="1"/>
</dbReference>
<dbReference type="PANTHER" id="PTHR11933">
    <property type="entry name" value="TRNA 5-METHYLAMINOMETHYL-2-THIOURIDYLATE -METHYLTRANSFERASE"/>
    <property type="match status" value="1"/>
</dbReference>
<dbReference type="Pfam" id="PF03054">
    <property type="entry name" value="tRNA_Me_trans"/>
    <property type="match status" value="1"/>
</dbReference>
<dbReference type="Pfam" id="PF20258">
    <property type="entry name" value="tRNA_Me_trans_C"/>
    <property type="match status" value="1"/>
</dbReference>
<dbReference type="Pfam" id="PF20259">
    <property type="entry name" value="tRNA_Me_trans_M"/>
    <property type="match status" value="1"/>
</dbReference>
<dbReference type="SUPFAM" id="SSF52402">
    <property type="entry name" value="Adenine nucleotide alpha hydrolases-like"/>
    <property type="match status" value="1"/>
</dbReference>
<gene>
    <name evidence="1" type="primary">mnmA</name>
    <name type="ordered locus">Lm4b_01522</name>
</gene>
<organism>
    <name type="scientific">Listeria monocytogenes serotype 4b (strain CLIP80459)</name>
    <dbReference type="NCBI Taxonomy" id="568819"/>
    <lineage>
        <taxon>Bacteria</taxon>
        <taxon>Bacillati</taxon>
        <taxon>Bacillota</taxon>
        <taxon>Bacilli</taxon>
        <taxon>Bacillales</taxon>
        <taxon>Listeriaceae</taxon>
        <taxon>Listeria</taxon>
    </lineage>
</organism>
<comment type="function">
    <text evidence="1">Catalyzes the 2-thiolation of uridine at the wobble position (U34) of tRNA, leading to the formation of s(2)U34.</text>
</comment>
<comment type="catalytic activity">
    <reaction evidence="1">
        <text>S-sulfanyl-L-cysteinyl-[protein] + uridine(34) in tRNA + AH2 + ATP = 2-thiouridine(34) in tRNA + L-cysteinyl-[protein] + A + AMP + diphosphate + H(+)</text>
        <dbReference type="Rhea" id="RHEA:47032"/>
        <dbReference type="Rhea" id="RHEA-COMP:10131"/>
        <dbReference type="Rhea" id="RHEA-COMP:11726"/>
        <dbReference type="Rhea" id="RHEA-COMP:11727"/>
        <dbReference type="Rhea" id="RHEA-COMP:11728"/>
        <dbReference type="ChEBI" id="CHEBI:13193"/>
        <dbReference type="ChEBI" id="CHEBI:15378"/>
        <dbReference type="ChEBI" id="CHEBI:17499"/>
        <dbReference type="ChEBI" id="CHEBI:29950"/>
        <dbReference type="ChEBI" id="CHEBI:30616"/>
        <dbReference type="ChEBI" id="CHEBI:33019"/>
        <dbReference type="ChEBI" id="CHEBI:61963"/>
        <dbReference type="ChEBI" id="CHEBI:65315"/>
        <dbReference type="ChEBI" id="CHEBI:87170"/>
        <dbReference type="ChEBI" id="CHEBI:456215"/>
        <dbReference type="EC" id="2.8.1.13"/>
    </reaction>
</comment>
<comment type="subcellular location">
    <subcellularLocation>
        <location evidence="1">Cytoplasm</location>
    </subcellularLocation>
</comment>
<comment type="similarity">
    <text evidence="1">Belongs to the MnmA/TRMU family.</text>
</comment>
<accession>C1KVF9</accession>
<sequence length="371" mass="41445">MSTNNSDIRVVVGMSGGVDSSVTAHILKEQGYDVIGIFMKNWDDTDEFGVCTATEDYDDVIRVANQIGIPYYAVNFEKEYWDKVFTYFLDEYKLGRTPNPDVMCNKEIKFKAFLEHAESLGADYVATGHYAQVKKVGDEIELLRGVDNNKDQTYFLNQLSQDQLKKVMFPLGGMEKTEVREIAKKAGLATANKKDSTGICFIGERNFKQFLSEYLPAQPGEMRTLNGEVLGKHDGLMYYTIGQRHGLGIGGDGEPWFVVGKDLKENVLFVEQGFHHETLYSDSLIATDISFTTNAEKPKTIECTAKFRYRQTDTKVTVHLREDGTAEVVFADPVRAITPGQAVVFYDGDICLGGGTIDTVWKNGAKLDYVG</sequence>
<proteinExistence type="inferred from homology"/>
<name>MNMA_LISMC</name>
<evidence type="ECO:0000255" key="1">
    <source>
        <dbReference type="HAMAP-Rule" id="MF_00144"/>
    </source>
</evidence>
<keyword id="KW-0067">ATP-binding</keyword>
<keyword id="KW-0963">Cytoplasm</keyword>
<keyword id="KW-1015">Disulfide bond</keyword>
<keyword id="KW-0547">Nucleotide-binding</keyword>
<keyword id="KW-0694">RNA-binding</keyword>
<keyword id="KW-0808">Transferase</keyword>
<keyword id="KW-0819">tRNA processing</keyword>
<keyword id="KW-0820">tRNA-binding</keyword>
<protein>
    <recommendedName>
        <fullName evidence="1">tRNA-specific 2-thiouridylase MnmA</fullName>
        <ecNumber evidence="1">2.8.1.13</ecNumber>
    </recommendedName>
</protein>
<feature type="chain" id="PRO_1000203307" description="tRNA-specific 2-thiouridylase MnmA">
    <location>
        <begin position="1"/>
        <end position="371"/>
    </location>
</feature>
<feature type="region of interest" description="Interaction with target base in tRNA" evidence="1">
    <location>
        <begin position="99"/>
        <end position="101"/>
    </location>
</feature>
<feature type="region of interest" description="Interaction with tRNA" evidence="1">
    <location>
        <begin position="150"/>
        <end position="152"/>
    </location>
</feature>
<feature type="region of interest" description="Interaction with tRNA" evidence="1">
    <location>
        <begin position="308"/>
        <end position="309"/>
    </location>
</feature>
<feature type="active site" description="Nucleophile" evidence="1">
    <location>
        <position position="104"/>
    </location>
</feature>
<feature type="active site" description="Cysteine persulfide intermediate" evidence="1">
    <location>
        <position position="200"/>
    </location>
</feature>
<feature type="binding site" evidence="1">
    <location>
        <begin position="13"/>
        <end position="20"/>
    </location>
    <ligand>
        <name>ATP</name>
        <dbReference type="ChEBI" id="CHEBI:30616"/>
    </ligand>
</feature>
<feature type="binding site" evidence="1">
    <location>
        <position position="39"/>
    </location>
    <ligand>
        <name>ATP</name>
        <dbReference type="ChEBI" id="CHEBI:30616"/>
    </ligand>
</feature>
<feature type="binding site" evidence="1">
    <location>
        <position position="128"/>
    </location>
    <ligand>
        <name>ATP</name>
        <dbReference type="ChEBI" id="CHEBI:30616"/>
    </ligand>
</feature>
<feature type="site" description="Interaction with tRNA" evidence="1">
    <location>
        <position position="129"/>
    </location>
</feature>
<feature type="site" description="Interaction with tRNA" evidence="1">
    <location>
        <position position="341"/>
    </location>
</feature>
<feature type="disulfide bond" description="Alternate" evidence="1">
    <location>
        <begin position="104"/>
        <end position="200"/>
    </location>
</feature>